<protein>
    <recommendedName>
        <fullName evidence="6">Deoxynogalonate monooxygenase</fullName>
        <ecNumber evidence="8 9">1.13.12.22</ecNumber>
    </recommendedName>
    <alternativeName>
        <fullName evidence="6">12-deoxy-nogalonic acid oxygenase</fullName>
    </alternativeName>
    <alternativeName>
        <fullName evidence="7">Cofactor-independent monooxygenase SnoaB</fullName>
    </alternativeName>
</protein>
<keyword id="KW-0002">3D-structure</keyword>
<keyword id="KW-0045">Antibiotic biosynthesis</keyword>
<keyword id="KW-0560">Oxidoreductase</keyword>
<accession>O54259</accession>
<accession>Q54493</accession>
<dbReference type="EC" id="1.13.12.22" evidence="8 9"/>
<dbReference type="EMBL" id="AJ224512">
    <property type="protein sequence ID" value="CAA12015.1"/>
    <property type="molecule type" value="Genomic_DNA"/>
</dbReference>
<dbReference type="PIR" id="T46674">
    <property type="entry name" value="T46674"/>
</dbReference>
<dbReference type="PDB" id="3KG0">
    <property type="method" value="X-ray"/>
    <property type="resolution" value="1.70 A"/>
    <property type="chains" value="A/B/C=1-118"/>
</dbReference>
<dbReference type="PDB" id="3KG1">
    <property type="method" value="X-ray"/>
    <property type="resolution" value="2.50 A"/>
    <property type="chains" value="A/B/C=1-118"/>
</dbReference>
<dbReference type="PDB" id="3KNG">
    <property type="method" value="X-ray"/>
    <property type="resolution" value="1.90 A"/>
    <property type="chains" value="A/B=2-118"/>
</dbReference>
<dbReference type="PDBsum" id="3KG0"/>
<dbReference type="PDBsum" id="3KG1"/>
<dbReference type="PDBsum" id="3KNG"/>
<dbReference type="SMR" id="O54259"/>
<dbReference type="KEGG" id="ag:CAA12015"/>
<dbReference type="BRENDA" id="1.13.12.22">
    <property type="organism ID" value="13766"/>
</dbReference>
<dbReference type="EvolutionaryTrace" id="O54259"/>
<dbReference type="GO" id="GO:0016703">
    <property type="term" value="F:oxidoreductase activity, acting on single donors with incorporation of molecular oxygen, incorporation of one atom of oxygen (internal monooxygenases or internal mixed function oxidases)"/>
    <property type="evidence" value="ECO:0000314"/>
    <property type="project" value="UniProtKB"/>
</dbReference>
<dbReference type="GO" id="GO:0017000">
    <property type="term" value="P:antibiotic biosynthetic process"/>
    <property type="evidence" value="ECO:0000314"/>
    <property type="project" value="UniProtKB"/>
</dbReference>
<dbReference type="Gene3D" id="3.30.70.100">
    <property type="match status" value="1"/>
</dbReference>
<dbReference type="InterPro" id="IPR007138">
    <property type="entry name" value="ABM_dom"/>
</dbReference>
<dbReference type="InterPro" id="IPR011008">
    <property type="entry name" value="Dimeric_a/b-barrel"/>
</dbReference>
<dbReference type="Pfam" id="PF03992">
    <property type="entry name" value="ABM"/>
    <property type="match status" value="1"/>
</dbReference>
<dbReference type="SUPFAM" id="SSF54909">
    <property type="entry name" value="Dimeric alpha+beta barrel"/>
    <property type="match status" value="1"/>
</dbReference>
<dbReference type="PROSITE" id="PS51725">
    <property type="entry name" value="ABM"/>
    <property type="match status" value="1"/>
</dbReference>
<reference key="1">
    <citation type="journal article" date="1996" name="Microbiology">
        <title>Production of hybrid anthracycline antibiotics by heterologous expression of Streptomyces nogalater nogalamycin biosynthesis genes.</title>
        <authorList>
            <person name="Ylihonko K."/>
            <person name="Hakala J."/>
            <person name="Kunnari T."/>
            <person name="Mantsala P."/>
        </authorList>
    </citation>
    <scope>NUCLEOTIDE SEQUENCE [GENOMIC DNA]</scope>
    <scope>FUNCTION</scope>
    <source>
        <strain>ATCC 27451 / DSM 40546 / JCM 4553 / NBRC 13445 / NCIMB 9489 / VKM Ac-1290</strain>
    </source>
</reference>
<reference key="2">
    <citation type="journal article" date="1996" name="Mol. Gen. Genet.">
        <title>A gene cluster involved in nogalamycin biosynthesis from Streptomyces nogalater: sequence analysis and complementation of early-block mutations in the anthracycline pathway.</title>
        <authorList>
            <person name="Ylihonko K."/>
            <person name="Tuikkanen J."/>
            <person name="Jussila S."/>
            <person name="Cong L."/>
            <person name="Mantsala P."/>
        </authorList>
    </citation>
    <scope>NUCLEOTIDE SEQUENCE [GENOMIC DNA]</scope>
    <scope>FUNCTION</scope>
    <source>
        <strain>ATCC 27451 / DSM 40546 / JCM 4553 / NBRC 13445 / NCIMB 9489 / VKM Ac-1290</strain>
    </source>
</reference>
<reference key="3">
    <citation type="journal article" date="1997" name="Mol. Gen. Genet.">
        <title>Characterization of Streptomyces nogalater genes encoding enzymes involved in glycosylation steps in nogalamycin biosynthesis.</title>
        <authorList>
            <person name="Torkkell S."/>
            <person name="Ylihonko K."/>
            <person name="Hakala J."/>
            <person name="Skurnik M."/>
            <person name="Mantsala P."/>
        </authorList>
    </citation>
    <scope>NUCLEOTIDE SEQUENCE [GENOMIC DNA]</scope>
    <source>
        <strain>ATCC 27451 / DSM 40546 / JCM 4553 / NBRC 13445 / NCIMB 9489 / VKM Ac-1290</strain>
    </source>
</reference>
<reference key="4">
    <citation type="journal article" date="2009" name="Acta Crystallogr. F">
        <title>Expression, purification and crystallization of the cofactor-independent monooxygenase SnoaB from the nogalamycin biosynthetic pathway.</title>
        <authorList>
            <person name="Koskiniemi H."/>
            <person name="Grocholski T."/>
            <person name="Schneider G."/>
            <person name="Niemi J."/>
        </authorList>
    </citation>
    <scope>CRYSTALLIZATION</scope>
    <scope>FUNCTION</scope>
    <scope>MUTAGENESIS OF PHE-29; PHE-40 AND LEU-89</scope>
    <scope>CATALYTIC ACTIVITY</scope>
    <scope>SUBUNIT</scope>
</reference>
<reference key="5">
    <citation type="journal article" date="2010" name="Biochemistry">
        <title>Crystal structure of the cofactor-independent monooxygenase SnoaB from Streptomyces nogalater: implications for the reaction mechanism.</title>
        <authorList>
            <person name="Grocholski T."/>
            <person name="Koskiniemi H."/>
            <person name="Lindqvist Y."/>
            <person name="Mantsala P."/>
            <person name="Niemi J."/>
            <person name="Schneider G."/>
        </authorList>
    </citation>
    <scope>X-RAY CRYSTALLOGRAPHY (1.70 ANGSTROMS) OF WILD-TYPE AND MUTANT ALA-63</scope>
    <scope>FUNCTION</scope>
    <scope>CATALYTIC ACTIVITY</scope>
    <scope>BIOPHYSICOCHEMICAL PROPERTIES</scope>
    <scope>MUTAGENESIS OF ASN-18; HIS-49; ASN-63; TRP-67 AND ARG-90</scope>
    <scope>SUBUNIT</scope>
    <scope>REACTION MECHANISM</scope>
</reference>
<sequence>MPTRVNDGVDADEVTFVNRFTVHGGPAEFESVFARTAAFFARQPGFVRHTLLRERDKDNSYVNIAVWTDHDAFRRALAQPGFLPHATALRALSTSEHGLFTARQTLPEGGDTTGSGHR</sequence>
<organism>
    <name type="scientific">Streptomyces nogalater</name>
    <dbReference type="NCBI Taxonomy" id="38314"/>
    <lineage>
        <taxon>Bacteria</taxon>
        <taxon>Bacillati</taxon>
        <taxon>Actinomycetota</taxon>
        <taxon>Actinomycetes</taxon>
        <taxon>Kitasatosporales</taxon>
        <taxon>Streptomycetaceae</taxon>
        <taxon>Streptomyces</taxon>
    </lineage>
</organism>
<comment type="function">
    <text evidence="4 5 8 9">Involved in the biosynthesis of the anthracycline (aromatic polyketide) antibiotic nogalamycin (PubMed:8668120, PubMed:8760909). Catalyzes the oxygenation of 12-deoxy-nogalonic acid at position 12 to yield nogalonic acid (PubMed:19255477, PubMed:20052967).</text>
</comment>
<comment type="catalytic activity">
    <reaction evidence="8 9">
        <text>deoxynogalonate + O2 = nogalonate + H2O + H(+)</text>
        <dbReference type="Rhea" id="RHEA:45056"/>
        <dbReference type="ChEBI" id="CHEBI:15377"/>
        <dbReference type="ChEBI" id="CHEBI:15378"/>
        <dbReference type="ChEBI" id="CHEBI:15379"/>
        <dbReference type="ChEBI" id="CHEBI:84897"/>
        <dbReference type="ChEBI" id="CHEBI:84900"/>
        <dbReference type="EC" id="1.13.12.22"/>
    </reaction>
</comment>
<comment type="biophysicochemical properties">
    <kinetics>
        <KM evidence="3">140 uM for dithranol</KM>
        <Vmax evidence="3">6.3 umol/min/mg enzyme with dithranol as substrate</Vmax>
        <text evidence="3">kcat is 1.5 sec(-1) for monooxygenase activity with dithranol as substrate.</text>
    </kinetics>
</comment>
<comment type="pathway">
    <text evidence="10">Antibiotic biosynthesis.</text>
</comment>
<comment type="subunit">
    <text evidence="2 3">Homodimer.</text>
</comment>
<evidence type="ECO:0000255" key="1">
    <source>
        <dbReference type="PROSITE-ProRule" id="PRU01062"/>
    </source>
</evidence>
<evidence type="ECO:0000269" key="2">
    <source>
    </source>
</evidence>
<evidence type="ECO:0000269" key="3">
    <source>
    </source>
</evidence>
<evidence type="ECO:0000269" key="4">
    <source>
    </source>
</evidence>
<evidence type="ECO:0000269" key="5">
    <source>
    </source>
</evidence>
<evidence type="ECO:0000303" key="6">
    <source>
    </source>
</evidence>
<evidence type="ECO:0000303" key="7">
    <source>
    </source>
</evidence>
<evidence type="ECO:0000305" key="8">
    <source>
    </source>
</evidence>
<evidence type="ECO:0000305" key="9">
    <source>
    </source>
</evidence>
<evidence type="ECO:0000305" key="10">
    <source>
    </source>
</evidence>
<evidence type="ECO:0007829" key="11">
    <source>
        <dbReference type="PDB" id="3KG0"/>
    </source>
</evidence>
<proteinExistence type="evidence at protein level"/>
<name>SNOAB_STRNO</name>
<feature type="chain" id="PRO_0000435850" description="Deoxynogalonate monooxygenase">
    <location>
        <begin position="1"/>
        <end position="118"/>
    </location>
</feature>
<feature type="domain" description="ABM" evidence="1">
    <location>
        <begin position="14"/>
        <end position="100"/>
    </location>
</feature>
<feature type="site" description="Important for catalytic activity" evidence="3">
    <location>
        <position position="18"/>
    </location>
</feature>
<feature type="site" description="Important for catalytic activity" evidence="3">
    <location>
        <position position="63"/>
    </location>
</feature>
<feature type="site" description="Important for catalytic activity" evidence="3">
    <location>
        <position position="67"/>
    </location>
</feature>
<feature type="mutagenesis site" description="Loss of monooxygenase activity." evidence="3">
    <original>N</original>
    <variation>A</variation>
    <location>
        <position position="18"/>
    </location>
</feature>
<feature type="mutagenesis site" description="Oxygenase activity comparable to the wild-type; when associated with M-40 and M-89." evidence="2">
    <original>F</original>
    <variation>M</variation>
    <location>
        <position position="29"/>
    </location>
</feature>
<feature type="mutagenesis site" description="Oxygenase activity comparable to the wild-type; when associated with M-29 and M-89." evidence="2">
    <original>F</original>
    <variation>M</variation>
    <location>
        <position position="40"/>
    </location>
</feature>
<feature type="mutagenesis site" description="Moderate decrease of catalytic efficiency." evidence="3">
    <original>H</original>
    <variation>A</variation>
    <location>
        <position position="49"/>
    </location>
</feature>
<feature type="mutagenesis site" description="Loss of monooxygenase activity." evidence="3">
    <original>N</original>
    <variation>A</variation>
    <location>
        <position position="63"/>
    </location>
</feature>
<feature type="mutagenesis site" description="Loss of monooxygenase activity." evidence="3">
    <original>W</original>
    <variation>F</variation>
    <location>
        <position position="67"/>
    </location>
</feature>
<feature type="mutagenesis site" description="Oxygenase activity comparable to the wild-type; when associated with M-29 and M-40." evidence="2">
    <original>L</original>
    <variation>M</variation>
    <location>
        <position position="89"/>
    </location>
</feature>
<feature type="mutagenesis site" description="Moderate decrease of catalytic efficiency." evidence="3">
    <original>R</original>
    <variation>Q</variation>
    <location>
        <position position="90"/>
    </location>
</feature>
<feature type="strand" evidence="11">
    <location>
        <begin position="14"/>
        <end position="22"/>
    </location>
</feature>
<feature type="helix" evidence="11">
    <location>
        <begin position="26"/>
        <end position="41"/>
    </location>
</feature>
<feature type="strand" evidence="11">
    <location>
        <begin position="46"/>
        <end position="53"/>
    </location>
</feature>
<feature type="strand" evidence="11">
    <location>
        <begin position="58"/>
        <end position="69"/>
    </location>
</feature>
<feature type="helix" evidence="11">
    <location>
        <begin position="70"/>
        <end position="78"/>
    </location>
</feature>
<feature type="helix" evidence="11">
    <location>
        <begin position="80"/>
        <end position="82"/>
    </location>
</feature>
<feature type="helix" evidence="11">
    <location>
        <begin position="83"/>
        <end position="92"/>
    </location>
</feature>
<feature type="strand" evidence="11">
    <location>
        <begin position="93"/>
        <end position="100"/>
    </location>
</feature>
<gene>
    <name evidence="6" type="primary">snoaB</name>
</gene>